<accession>B5EXG5</accession>
<name>EX7S_SALA4</name>
<proteinExistence type="inferred from homology"/>
<keyword id="KW-0963">Cytoplasm</keyword>
<keyword id="KW-0269">Exonuclease</keyword>
<keyword id="KW-0378">Hydrolase</keyword>
<keyword id="KW-0540">Nuclease</keyword>
<organism>
    <name type="scientific">Salmonella agona (strain SL483)</name>
    <dbReference type="NCBI Taxonomy" id="454166"/>
    <lineage>
        <taxon>Bacteria</taxon>
        <taxon>Pseudomonadati</taxon>
        <taxon>Pseudomonadota</taxon>
        <taxon>Gammaproteobacteria</taxon>
        <taxon>Enterobacterales</taxon>
        <taxon>Enterobacteriaceae</taxon>
        <taxon>Salmonella</taxon>
    </lineage>
</organism>
<comment type="function">
    <text evidence="1">Bidirectionally degrades single-stranded DNA into large acid-insoluble oligonucleotides, which are then degraded further into small acid-soluble oligonucleotides.</text>
</comment>
<comment type="catalytic activity">
    <reaction evidence="1">
        <text>Exonucleolytic cleavage in either 5'- to 3'- or 3'- to 5'-direction to yield nucleoside 5'-phosphates.</text>
        <dbReference type="EC" id="3.1.11.6"/>
    </reaction>
</comment>
<comment type="subunit">
    <text evidence="1">Heterooligomer composed of large and small subunits.</text>
</comment>
<comment type="subcellular location">
    <subcellularLocation>
        <location evidence="1">Cytoplasm</location>
    </subcellularLocation>
</comment>
<comment type="similarity">
    <text evidence="1">Belongs to the XseB family.</text>
</comment>
<gene>
    <name evidence="1" type="primary">xseB</name>
    <name type="ordered locus">SeAg_B0463</name>
</gene>
<dbReference type="EC" id="3.1.11.6" evidence="1"/>
<dbReference type="EMBL" id="CP001138">
    <property type="protein sequence ID" value="ACH51353.1"/>
    <property type="molecule type" value="Genomic_DNA"/>
</dbReference>
<dbReference type="RefSeq" id="WP_001124944.1">
    <property type="nucleotide sequence ID" value="NC_011149.1"/>
</dbReference>
<dbReference type="SMR" id="B5EXG5"/>
<dbReference type="KEGG" id="sea:SeAg_B0463"/>
<dbReference type="HOGENOM" id="CLU_145918_3_3_6"/>
<dbReference type="Proteomes" id="UP000008819">
    <property type="component" value="Chromosome"/>
</dbReference>
<dbReference type="GO" id="GO:0005829">
    <property type="term" value="C:cytosol"/>
    <property type="evidence" value="ECO:0007669"/>
    <property type="project" value="TreeGrafter"/>
</dbReference>
<dbReference type="GO" id="GO:0009318">
    <property type="term" value="C:exodeoxyribonuclease VII complex"/>
    <property type="evidence" value="ECO:0007669"/>
    <property type="project" value="InterPro"/>
</dbReference>
<dbReference type="GO" id="GO:0008855">
    <property type="term" value="F:exodeoxyribonuclease VII activity"/>
    <property type="evidence" value="ECO:0007669"/>
    <property type="project" value="UniProtKB-UniRule"/>
</dbReference>
<dbReference type="GO" id="GO:0006308">
    <property type="term" value="P:DNA catabolic process"/>
    <property type="evidence" value="ECO:0007669"/>
    <property type="project" value="UniProtKB-UniRule"/>
</dbReference>
<dbReference type="FunFam" id="1.10.287.1040:FF:000001">
    <property type="entry name" value="Exodeoxyribonuclease 7 small subunit"/>
    <property type="match status" value="1"/>
</dbReference>
<dbReference type="Gene3D" id="1.10.287.1040">
    <property type="entry name" value="Exonuclease VII, small subunit"/>
    <property type="match status" value="1"/>
</dbReference>
<dbReference type="HAMAP" id="MF_00337">
    <property type="entry name" value="Exonuc_7_S"/>
    <property type="match status" value="1"/>
</dbReference>
<dbReference type="InterPro" id="IPR003761">
    <property type="entry name" value="Exonuc_VII_S"/>
</dbReference>
<dbReference type="InterPro" id="IPR037004">
    <property type="entry name" value="Exonuc_VII_ssu_sf"/>
</dbReference>
<dbReference type="NCBIfam" id="NF002137">
    <property type="entry name" value="PRK00977.1-1"/>
    <property type="match status" value="1"/>
</dbReference>
<dbReference type="NCBIfam" id="NF002140">
    <property type="entry name" value="PRK00977.1-4"/>
    <property type="match status" value="1"/>
</dbReference>
<dbReference type="NCBIfam" id="TIGR01280">
    <property type="entry name" value="xseB"/>
    <property type="match status" value="1"/>
</dbReference>
<dbReference type="PANTHER" id="PTHR34137">
    <property type="entry name" value="EXODEOXYRIBONUCLEASE 7 SMALL SUBUNIT"/>
    <property type="match status" value="1"/>
</dbReference>
<dbReference type="PANTHER" id="PTHR34137:SF1">
    <property type="entry name" value="EXODEOXYRIBONUCLEASE 7 SMALL SUBUNIT"/>
    <property type="match status" value="1"/>
</dbReference>
<dbReference type="Pfam" id="PF02609">
    <property type="entry name" value="Exonuc_VII_S"/>
    <property type="match status" value="1"/>
</dbReference>
<dbReference type="PIRSF" id="PIRSF006488">
    <property type="entry name" value="Exonuc_VII_S"/>
    <property type="match status" value="1"/>
</dbReference>
<dbReference type="SUPFAM" id="SSF116842">
    <property type="entry name" value="XseB-like"/>
    <property type="match status" value="1"/>
</dbReference>
<sequence>MPKKNEAPASFETALSELEHIVTRLESGDLPLEDALNEFERGVQLARQGQAKLQQAEQRVQILLSDNEEASPEPFIADNE</sequence>
<feature type="chain" id="PRO_1000119949" description="Exodeoxyribonuclease 7 small subunit">
    <location>
        <begin position="1"/>
        <end position="80"/>
    </location>
</feature>
<protein>
    <recommendedName>
        <fullName evidence="1">Exodeoxyribonuclease 7 small subunit</fullName>
        <ecNumber evidence="1">3.1.11.6</ecNumber>
    </recommendedName>
    <alternativeName>
        <fullName evidence="1">Exodeoxyribonuclease VII small subunit</fullName>
        <shortName evidence="1">Exonuclease VII small subunit</shortName>
    </alternativeName>
</protein>
<reference key="1">
    <citation type="journal article" date="2011" name="J. Bacteriol.">
        <title>Comparative genomics of 28 Salmonella enterica isolates: evidence for CRISPR-mediated adaptive sublineage evolution.</title>
        <authorList>
            <person name="Fricke W.F."/>
            <person name="Mammel M.K."/>
            <person name="McDermott P.F."/>
            <person name="Tartera C."/>
            <person name="White D.G."/>
            <person name="Leclerc J.E."/>
            <person name="Ravel J."/>
            <person name="Cebula T.A."/>
        </authorList>
    </citation>
    <scope>NUCLEOTIDE SEQUENCE [LARGE SCALE GENOMIC DNA]</scope>
    <source>
        <strain>SL483</strain>
    </source>
</reference>
<evidence type="ECO:0000255" key="1">
    <source>
        <dbReference type="HAMAP-Rule" id="MF_00337"/>
    </source>
</evidence>